<name>KAD_LEPBP</name>
<feature type="chain" id="PRO_1000100578" description="Adenylate kinase">
    <location>
        <begin position="1"/>
        <end position="186"/>
    </location>
</feature>
<feature type="region of interest" description="NMP" evidence="1">
    <location>
        <begin position="31"/>
        <end position="60"/>
    </location>
</feature>
<feature type="region of interest" description="LID" evidence="1">
    <location>
        <begin position="127"/>
        <end position="137"/>
    </location>
</feature>
<feature type="binding site" evidence="1">
    <location>
        <begin position="11"/>
        <end position="16"/>
    </location>
    <ligand>
        <name>ATP</name>
        <dbReference type="ChEBI" id="CHEBI:30616"/>
    </ligand>
</feature>
<feature type="binding site" evidence="1">
    <location>
        <position position="32"/>
    </location>
    <ligand>
        <name>AMP</name>
        <dbReference type="ChEBI" id="CHEBI:456215"/>
    </ligand>
</feature>
<feature type="binding site" evidence="1">
    <location>
        <position position="37"/>
    </location>
    <ligand>
        <name>AMP</name>
        <dbReference type="ChEBI" id="CHEBI:456215"/>
    </ligand>
</feature>
<feature type="binding site" evidence="1">
    <location>
        <begin position="58"/>
        <end position="60"/>
    </location>
    <ligand>
        <name>AMP</name>
        <dbReference type="ChEBI" id="CHEBI:456215"/>
    </ligand>
</feature>
<feature type="binding site" evidence="1">
    <location>
        <begin position="86"/>
        <end position="89"/>
    </location>
    <ligand>
        <name>AMP</name>
        <dbReference type="ChEBI" id="CHEBI:456215"/>
    </ligand>
</feature>
<feature type="binding site" evidence="1">
    <location>
        <position position="93"/>
    </location>
    <ligand>
        <name>AMP</name>
        <dbReference type="ChEBI" id="CHEBI:456215"/>
    </ligand>
</feature>
<feature type="binding site" evidence="1">
    <location>
        <position position="128"/>
    </location>
    <ligand>
        <name>ATP</name>
        <dbReference type="ChEBI" id="CHEBI:30616"/>
    </ligand>
</feature>
<feature type="binding site" evidence="1">
    <location>
        <position position="134"/>
    </location>
    <ligand>
        <name>AMP</name>
        <dbReference type="ChEBI" id="CHEBI:456215"/>
    </ligand>
</feature>
<feature type="binding site" evidence="1">
    <location>
        <position position="145"/>
    </location>
    <ligand>
        <name>AMP</name>
        <dbReference type="ChEBI" id="CHEBI:456215"/>
    </ligand>
</feature>
<feature type="binding site" evidence="1">
    <location>
        <position position="173"/>
    </location>
    <ligand>
        <name>ATP</name>
        <dbReference type="ChEBI" id="CHEBI:30616"/>
    </ligand>
</feature>
<accession>B0SSF7</accession>
<dbReference type="EC" id="2.7.4.3" evidence="1"/>
<dbReference type="EMBL" id="CP000786">
    <property type="protein sequence ID" value="ABZ98047.1"/>
    <property type="molecule type" value="Genomic_DNA"/>
</dbReference>
<dbReference type="RefSeq" id="WP_012388924.1">
    <property type="nucleotide sequence ID" value="NC_010602.1"/>
</dbReference>
<dbReference type="SMR" id="B0SSF7"/>
<dbReference type="STRING" id="456481.LEPBI_I1944"/>
<dbReference type="KEGG" id="lbi:LEPBI_I1944"/>
<dbReference type="HOGENOM" id="CLU_032354_4_1_12"/>
<dbReference type="OrthoDB" id="9805030at2"/>
<dbReference type="BioCyc" id="LBIF456481:LEPBI_RS09605-MONOMER"/>
<dbReference type="UniPathway" id="UPA00588">
    <property type="reaction ID" value="UER00649"/>
</dbReference>
<dbReference type="Proteomes" id="UP000001847">
    <property type="component" value="Chromosome I"/>
</dbReference>
<dbReference type="GO" id="GO:0005737">
    <property type="term" value="C:cytoplasm"/>
    <property type="evidence" value="ECO:0007669"/>
    <property type="project" value="UniProtKB-SubCell"/>
</dbReference>
<dbReference type="GO" id="GO:0004017">
    <property type="term" value="F:adenylate kinase activity"/>
    <property type="evidence" value="ECO:0007669"/>
    <property type="project" value="UniProtKB-UniRule"/>
</dbReference>
<dbReference type="GO" id="GO:0005524">
    <property type="term" value="F:ATP binding"/>
    <property type="evidence" value="ECO:0007669"/>
    <property type="project" value="UniProtKB-UniRule"/>
</dbReference>
<dbReference type="GO" id="GO:0044209">
    <property type="term" value="P:AMP salvage"/>
    <property type="evidence" value="ECO:0007669"/>
    <property type="project" value="UniProtKB-UniRule"/>
</dbReference>
<dbReference type="CDD" id="cd01428">
    <property type="entry name" value="ADK"/>
    <property type="match status" value="1"/>
</dbReference>
<dbReference type="Gene3D" id="3.40.50.300">
    <property type="entry name" value="P-loop containing nucleotide triphosphate hydrolases"/>
    <property type="match status" value="1"/>
</dbReference>
<dbReference type="HAMAP" id="MF_00235">
    <property type="entry name" value="Adenylate_kinase_Adk"/>
    <property type="match status" value="1"/>
</dbReference>
<dbReference type="InterPro" id="IPR006259">
    <property type="entry name" value="Adenyl_kin_sub"/>
</dbReference>
<dbReference type="InterPro" id="IPR000850">
    <property type="entry name" value="Adenylat/UMP-CMP_kin"/>
</dbReference>
<dbReference type="InterPro" id="IPR033690">
    <property type="entry name" value="Adenylat_kinase_CS"/>
</dbReference>
<dbReference type="InterPro" id="IPR027417">
    <property type="entry name" value="P-loop_NTPase"/>
</dbReference>
<dbReference type="NCBIfam" id="TIGR01351">
    <property type="entry name" value="adk"/>
    <property type="match status" value="1"/>
</dbReference>
<dbReference type="NCBIfam" id="NF001381">
    <property type="entry name" value="PRK00279.1-3"/>
    <property type="match status" value="1"/>
</dbReference>
<dbReference type="NCBIfam" id="NF011100">
    <property type="entry name" value="PRK14527.1"/>
    <property type="match status" value="1"/>
</dbReference>
<dbReference type="NCBIfam" id="NF011101">
    <property type="entry name" value="PRK14528.1"/>
    <property type="match status" value="1"/>
</dbReference>
<dbReference type="NCBIfam" id="NF011104">
    <property type="entry name" value="PRK14531.1"/>
    <property type="match status" value="1"/>
</dbReference>
<dbReference type="NCBIfam" id="NF011105">
    <property type="entry name" value="PRK14532.1"/>
    <property type="match status" value="1"/>
</dbReference>
<dbReference type="PANTHER" id="PTHR23359">
    <property type="entry name" value="NUCLEOTIDE KINASE"/>
    <property type="match status" value="1"/>
</dbReference>
<dbReference type="Pfam" id="PF00406">
    <property type="entry name" value="ADK"/>
    <property type="match status" value="1"/>
</dbReference>
<dbReference type="PRINTS" id="PR00094">
    <property type="entry name" value="ADENYLTKNASE"/>
</dbReference>
<dbReference type="SUPFAM" id="SSF52540">
    <property type="entry name" value="P-loop containing nucleoside triphosphate hydrolases"/>
    <property type="match status" value="1"/>
</dbReference>
<dbReference type="PROSITE" id="PS00113">
    <property type="entry name" value="ADENYLATE_KINASE"/>
    <property type="match status" value="1"/>
</dbReference>
<organism>
    <name type="scientific">Leptospira biflexa serovar Patoc (strain Patoc 1 / ATCC 23582 / Paris)</name>
    <dbReference type="NCBI Taxonomy" id="456481"/>
    <lineage>
        <taxon>Bacteria</taxon>
        <taxon>Pseudomonadati</taxon>
        <taxon>Spirochaetota</taxon>
        <taxon>Spirochaetia</taxon>
        <taxon>Leptospirales</taxon>
        <taxon>Leptospiraceae</taxon>
        <taxon>Leptospira</taxon>
    </lineage>
</organism>
<keyword id="KW-0067">ATP-binding</keyword>
<keyword id="KW-0963">Cytoplasm</keyword>
<keyword id="KW-0418">Kinase</keyword>
<keyword id="KW-0545">Nucleotide biosynthesis</keyword>
<keyword id="KW-0547">Nucleotide-binding</keyword>
<keyword id="KW-1185">Reference proteome</keyword>
<keyword id="KW-0808">Transferase</keyword>
<gene>
    <name evidence="1" type="primary">adk</name>
    <name type="ordered locus">LEPBI_I1944</name>
</gene>
<evidence type="ECO:0000255" key="1">
    <source>
        <dbReference type="HAMAP-Rule" id="MF_00235"/>
    </source>
</evidence>
<reference key="1">
    <citation type="journal article" date="2008" name="PLoS ONE">
        <title>Genome sequence of the saprophyte Leptospira biflexa provides insights into the evolution of Leptospira and the pathogenesis of leptospirosis.</title>
        <authorList>
            <person name="Picardeau M."/>
            <person name="Bulach D.M."/>
            <person name="Bouchier C."/>
            <person name="Zuerner R.L."/>
            <person name="Zidane N."/>
            <person name="Wilson P.J."/>
            <person name="Creno S."/>
            <person name="Kuczek E.S."/>
            <person name="Bommezzadri S."/>
            <person name="Davis J.C."/>
            <person name="McGrath A."/>
            <person name="Johnson M.J."/>
            <person name="Boursaux-Eude C."/>
            <person name="Seemann T."/>
            <person name="Rouy Z."/>
            <person name="Coppel R.L."/>
            <person name="Rood J.I."/>
            <person name="Lajus A."/>
            <person name="Davies J.K."/>
            <person name="Medigue C."/>
            <person name="Adler B."/>
        </authorList>
    </citation>
    <scope>NUCLEOTIDE SEQUENCE [LARGE SCALE GENOMIC DNA]</scope>
    <source>
        <strain>Patoc 1 / ATCC 23582 / Paris</strain>
    </source>
</reference>
<protein>
    <recommendedName>
        <fullName evidence="1">Adenylate kinase</fullName>
        <shortName evidence="1">AK</shortName>
        <ecNumber evidence="1">2.7.4.3</ecNumber>
    </recommendedName>
    <alternativeName>
        <fullName evidence="1">ATP-AMP transphosphorylase</fullName>
    </alternativeName>
    <alternativeName>
        <fullName evidence="1">ATP:AMP phosphotransferase</fullName>
    </alternativeName>
    <alternativeName>
        <fullName evidence="1">Adenylate monophosphate kinase</fullName>
    </alternativeName>
</protein>
<proteinExistence type="inferred from homology"/>
<comment type="function">
    <text evidence="1">Catalyzes the reversible transfer of the terminal phosphate group between ATP and AMP. Plays an important role in cellular energy homeostasis and in adenine nucleotide metabolism.</text>
</comment>
<comment type="catalytic activity">
    <reaction evidence="1">
        <text>AMP + ATP = 2 ADP</text>
        <dbReference type="Rhea" id="RHEA:12973"/>
        <dbReference type="ChEBI" id="CHEBI:30616"/>
        <dbReference type="ChEBI" id="CHEBI:456215"/>
        <dbReference type="ChEBI" id="CHEBI:456216"/>
        <dbReference type="EC" id="2.7.4.3"/>
    </reaction>
</comment>
<comment type="pathway">
    <text evidence="1">Purine metabolism; AMP biosynthesis via salvage pathway; AMP from ADP: step 1/1.</text>
</comment>
<comment type="subunit">
    <text evidence="1">Monomer.</text>
</comment>
<comment type="subcellular location">
    <subcellularLocation>
        <location evidence="1">Cytoplasm</location>
    </subcellularLocation>
</comment>
<comment type="domain">
    <text evidence="1">Consists of three domains, a large central CORE domain and two small peripheral domains, NMPbind and LID, which undergo movements during catalysis. The LID domain closes over the site of phosphoryl transfer upon ATP binding. Assembling and dissambling the active center during each catalytic cycle provides an effective means to prevent ATP hydrolysis.</text>
</comment>
<comment type="similarity">
    <text evidence="1">Belongs to the adenylate kinase family.</text>
</comment>
<sequence>MKRLIFMGPPGAGKGTQADIIKEKYNIPQISTGDILRAAVKNGTAMGIEAKKYMDAGDLVPDAVVIGIIRDRLVEADCANGFILDGFPRTVEQAKALSEILKELHMELDSVVNLDVPDEELVKRLLGRAIKEGRSDDNEETIKNRLHTYNTKTLPLIDFYKATGILRQINGLGSMEEITNTILKSI</sequence>